<sequence>MAQFFKAKPNSSKQLSAKVSLQVTRLDHLGAGIAQHNGKVVFIPGVLPGEKAMVQLTEQKKRYSRAKLLNLETHSIDRVEPKCAHYHQCGGCDLQHLSLEKQRLHKESALVSLMAKLSHTEAEALVPAIIGEQWHYRRRARLATFYHQETKRTTLGFRAQSSKEVIDISSCPVLAKSLSELISPLSKLLNQLASRRALGHVELIDVDNGQFVVVRATKELSDKDKEKLLSFAQEHKVNLIVQGNEGELLVIKGPKELPFYTLNSDIKLSFTPGNFVQVNGEINRAMVDQAVQWLDVKADERVLDLFCGVGNFSLPLAKSGAEVIGVEGVPEMVAQARINAKQSDLSDVTFFHTDLSADLSKEPWLGKVDKLLLDPARAGAFESLQWLKKMKPKSIVYVSCDPSSLARDSEPLLKHGYKLKKLGLVDMFPQTHHIEAMALFELS</sequence>
<feature type="chain" id="PRO_1000200856" description="23S rRNA (uracil(1939)-C(5))-methyltransferase RlmD">
    <location>
        <begin position="1"/>
        <end position="443"/>
    </location>
</feature>
<feature type="domain" description="TRAM" evidence="1">
    <location>
        <begin position="12"/>
        <end position="70"/>
    </location>
</feature>
<feature type="active site" description="Nucleophile" evidence="1">
    <location>
        <position position="400"/>
    </location>
</feature>
<feature type="binding site" evidence="1">
    <location>
        <position position="83"/>
    </location>
    <ligand>
        <name>[4Fe-4S] cluster</name>
        <dbReference type="ChEBI" id="CHEBI:49883"/>
    </ligand>
</feature>
<feature type="binding site" evidence="1">
    <location>
        <position position="89"/>
    </location>
    <ligand>
        <name>[4Fe-4S] cluster</name>
        <dbReference type="ChEBI" id="CHEBI:49883"/>
    </ligand>
</feature>
<feature type="binding site" evidence="1">
    <location>
        <position position="92"/>
    </location>
    <ligand>
        <name>[4Fe-4S] cluster</name>
        <dbReference type="ChEBI" id="CHEBI:49883"/>
    </ligand>
</feature>
<feature type="binding site" evidence="1">
    <location>
        <position position="171"/>
    </location>
    <ligand>
        <name>[4Fe-4S] cluster</name>
        <dbReference type="ChEBI" id="CHEBI:49883"/>
    </ligand>
</feature>
<feature type="binding site" evidence="1">
    <location>
        <position position="277"/>
    </location>
    <ligand>
        <name>S-adenosyl-L-methionine</name>
        <dbReference type="ChEBI" id="CHEBI:59789"/>
    </ligand>
</feature>
<feature type="binding site" evidence="1">
    <location>
        <position position="306"/>
    </location>
    <ligand>
        <name>S-adenosyl-L-methionine</name>
        <dbReference type="ChEBI" id="CHEBI:59789"/>
    </ligand>
</feature>
<feature type="binding site" evidence="1">
    <location>
        <position position="311"/>
    </location>
    <ligand>
        <name>S-adenosyl-L-methionine</name>
        <dbReference type="ChEBI" id="CHEBI:59789"/>
    </ligand>
</feature>
<feature type="binding site" evidence="1">
    <location>
        <position position="327"/>
    </location>
    <ligand>
        <name>S-adenosyl-L-methionine</name>
        <dbReference type="ChEBI" id="CHEBI:59789"/>
    </ligand>
</feature>
<feature type="binding site" evidence="1">
    <location>
        <position position="354"/>
    </location>
    <ligand>
        <name>S-adenosyl-L-methionine</name>
        <dbReference type="ChEBI" id="CHEBI:59789"/>
    </ligand>
</feature>
<feature type="binding site" evidence="1">
    <location>
        <position position="374"/>
    </location>
    <ligand>
        <name>S-adenosyl-L-methionine</name>
        <dbReference type="ChEBI" id="CHEBI:59789"/>
    </ligand>
</feature>
<evidence type="ECO:0000255" key="1">
    <source>
        <dbReference type="HAMAP-Rule" id="MF_01010"/>
    </source>
</evidence>
<reference key="1">
    <citation type="submission" date="2008-02" db="EMBL/GenBank/DDBJ databases">
        <title>Complete sequence of Shewanella woodyi ATCC 51908.</title>
        <authorList>
            <consortium name="US DOE Joint Genome Institute"/>
            <person name="Copeland A."/>
            <person name="Lucas S."/>
            <person name="Lapidus A."/>
            <person name="Glavina del Rio T."/>
            <person name="Dalin E."/>
            <person name="Tice H."/>
            <person name="Bruce D."/>
            <person name="Goodwin L."/>
            <person name="Pitluck S."/>
            <person name="Sims D."/>
            <person name="Brettin T."/>
            <person name="Detter J.C."/>
            <person name="Han C."/>
            <person name="Kuske C.R."/>
            <person name="Schmutz J."/>
            <person name="Larimer F."/>
            <person name="Land M."/>
            <person name="Hauser L."/>
            <person name="Kyrpides N."/>
            <person name="Lykidis A."/>
            <person name="Zhao J.-S."/>
            <person name="Richardson P."/>
        </authorList>
    </citation>
    <scope>NUCLEOTIDE SEQUENCE [LARGE SCALE GENOMIC DNA]</scope>
    <source>
        <strain>ATCC 51908 / MS32</strain>
    </source>
</reference>
<accession>B1KPU0</accession>
<protein>
    <recommendedName>
        <fullName evidence="1">23S rRNA (uracil(1939)-C(5))-methyltransferase RlmD</fullName>
        <ecNumber evidence="1">2.1.1.190</ecNumber>
    </recommendedName>
    <alternativeName>
        <fullName evidence="1">23S rRNA(m5U1939)-methyltransferase</fullName>
    </alternativeName>
</protein>
<name>RLMD_SHEWM</name>
<gene>
    <name evidence="1" type="primary">rlmD</name>
    <name type="synonym">rumA</name>
    <name type="ordered locus">Swoo_3354</name>
</gene>
<proteinExistence type="inferred from homology"/>
<keyword id="KW-0004">4Fe-4S</keyword>
<keyword id="KW-0408">Iron</keyword>
<keyword id="KW-0411">Iron-sulfur</keyword>
<keyword id="KW-0479">Metal-binding</keyword>
<keyword id="KW-0489">Methyltransferase</keyword>
<keyword id="KW-1185">Reference proteome</keyword>
<keyword id="KW-0698">rRNA processing</keyword>
<keyword id="KW-0949">S-adenosyl-L-methionine</keyword>
<keyword id="KW-0808">Transferase</keyword>
<organism>
    <name type="scientific">Shewanella woodyi (strain ATCC 51908 / MS32)</name>
    <dbReference type="NCBI Taxonomy" id="392500"/>
    <lineage>
        <taxon>Bacteria</taxon>
        <taxon>Pseudomonadati</taxon>
        <taxon>Pseudomonadota</taxon>
        <taxon>Gammaproteobacteria</taxon>
        <taxon>Alteromonadales</taxon>
        <taxon>Shewanellaceae</taxon>
        <taxon>Shewanella</taxon>
    </lineage>
</organism>
<dbReference type="EC" id="2.1.1.190" evidence="1"/>
<dbReference type="EMBL" id="CP000961">
    <property type="protein sequence ID" value="ACA87623.1"/>
    <property type="molecule type" value="Genomic_DNA"/>
</dbReference>
<dbReference type="RefSeq" id="WP_012325958.1">
    <property type="nucleotide sequence ID" value="NC_010506.1"/>
</dbReference>
<dbReference type="SMR" id="B1KPU0"/>
<dbReference type="STRING" id="392500.Swoo_3354"/>
<dbReference type="KEGG" id="swd:Swoo_3354"/>
<dbReference type="eggNOG" id="COG2265">
    <property type="taxonomic scope" value="Bacteria"/>
</dbReference>
<dbReference type="HOGENOM" id="CLU_014689_8_2_6"/>
<dbReference type="Proteomes" id="UP000002168">
    <property type="component" value="Chromosome"/>
</dbReference>
<dbReference type="GO" id="GO:0051539">
    <property type="term" value="F:4 iron, 4 sulfur cluster binding"/>
    <property type="evidence" value="ECO:0007669"/>
    <property type="project" value="UniProtKB-KW"/>
</dbReference>
<dbReference type="GO" id="GO:0005506">
    <property type="term" value="F:iron ion binding"/>
    <property type="evidence" value="ECO:0007669"/>
    <property type="project" value="UniProtKB-UniRule"/>
</dbReference>
<dbReference type="GO" id="GO:0003723">
    <property type="term" value="F:RNA binding"/>
    <property type="evidence" value="ECO:0007669"/>
    <property type="project" value="InterPro"/>
</dbReference>
<dbReference type="GO" id="GO:0070041">
    <property type="term" value="F:rRNA (uridine-C5-)-methyltransferase activity"/>
    <property type="evidence" value="ECO:0007669"/>
    <property type="project" value="UniProtKB-UniRule"/>
</dbReference>
<dbReference type="GO" id="GO:0070475">
    <property type="term" value="P:rRNA base methylation"/>
    <property type="evidence" value="ECO:0007669"/>
    <property type="project" value="TreeGrafter"/>
</dbReference>
<dbReference type="CDD" id="cd02440">
    <property type="entry name" value="AdoMet_MTases"/>
    <property type="match status" value="1"/>
</dbReference>
<dbReference type="FunFam" id="3.40.50.150:FF:000009">
    <property type="entry name" value="23S rRNA (Uracil(1939)-C(5))-methyltransferase RlmD"/>
    <property type="match status" value="1"/>
</dbReference>
<dbReference type="FunFam" id="2.40.50.140:FF:000097">
    <property type="entry name" value="23S rRNA (uracil(1939)-C(5))-methyltransferase RlmD"/>
    <property type="match status" value="1"/>
</dbReference>
<dbReference type="Gene3D" id="2.40.50.1070">
    <property type="match status" value="1"/>
</dbReference>
<dbReference type="Gene3D" id="2.40.50.140">
    <property type="entry name" value="Nucleic acid-binding proteins"/>
    <property type="match status" value="1"/>
</dbReference>
<dbReference type="Gene3D" id="3.40.50.150">
    <property type="entry name" value="Vaccinia Virus protein VP39"/>
    <property type="match status" value="1"/>
</dbReference>
<dbReference type="HAMAP" id="MF_01010">
    <property type="entry name" value="23SrRNA_methyltr_RlmD"/>
    <property type="match status" value="1"/>
</dbReference>
<dbReference type="InterPro" id="IPR001566">
    <property type="entry name" value="23S_rRNA_MeTrfase_RlmD"/>
</dbReference>
<dbReference type="InterPro" id="IPR030390">
    <property type="entry name" value="MeTrfase_TrmA_AS"/>
</dbReference>
<dbReference type="InterPro" id="IPR030391">
    <property type="entry name" value="MeTrfase_TrmA_CS"/>
</dbReference>
<dbReference type="InterPro" id="IPR012340">
    <property type="entry name" value="NA-bd_OB-fold"/>
</dbReference>
<dbReference type="InterPro" id="IPR029063">
    <property type="entry name" value="SAM-dependent_MTases_sf"/>
</dbReference>
<dbReference type="InterPro" id="IPR002792">
    <property type="entry name" value="TRAM_dom"/>
</dbReference>
<dbReference type="InterPro" id="IPR010280">
    <property type="entry name" value="U5_MeTrfase_fam"/>
</dbReference>
<dbReference type="NCBIfam" id="NF009639">
    <property type="entry name" value="PRK13168.1"/>
    <property type="match status" value="1"/>
</dbReference>
<dbReference type="NCBIfam" id="TIGR00479">
    <property type="entry name" value="rumA"/>
    <property type="match status" value="1"/>
</dbReference>
<dbReference type="PANTHER" id="PTHR11061:SF49">
    <property type="entry name" value="23S RRNA (URACIL(1939)-C(5))-METHYLTRANSFERASE RLMD"/>
    <property type="match status" value="1"/>
</dbReference>
<dbReference type="PANTHER" id="PTHR11061">
    <property type="entry name" value="RNA M5U METHYLTRANSFERASE"/>
    <property type="match status" value="1"/>
</dbReference>
<dbReference type="Pfam" id="PF01938">
    <property type="entry name" value="TRAM"/>
    <property type="match status" value="1"/>
</dbReference>
<dbReference type="Pfam" id="PF05958">
    <property type="entry name" value="tRNA_U5-meth_tr"/>
    <property type="match status" value="1"/>
</dbReference>
<dbReference type="SUPFAM" id="SSF50249">
    <property type="entry name" value="Nucleic acid-binding proteins"/>
    <property type="match status" value="1"/>
</dbReference>
<dbReference type="SUPFAM" id="SSF53335">
    <property type="entry name" value="S-adenosyl-L-methionine-dependent methyltransferases"/>
    <property type="match status" value="1"/>
</dbReference>
<dbReference type="PROSITE" id="PS51687">
    <property type="entry name" value="SAM_MT_RNA_M5U"/>
    <property type="match status" value="1"/>
</dbReference>
<dbReference type="PROSITE" id="PS50926">
    <property type="entry name" value="TRAM"/>
    <property type="match status" value="1"/>
</dbReference>
<dbReference type="PROSITE" id="PS01230">
    <property type="entry name" value="TRMA_1"/>
    <property type="match status" value="1"/>
</dbReference>
<dbReference type="PROSITE" id="PS01231">
    <property type="entry name" value="TRMA_2"/>
    <property type="match status" value="1"/>
</dbReference>
<comment type="function">
    <text evidence="1">Catalyzes the formation of 5-methyl-uridine at position 1939 (m5U1939) in 23S rRNA.</text>
</comment>
<comment type="catalytic activity">
    <reaction evidence="1">
        <text>uridine(1939) in 23S rRNA + S-adenosyl-L-methionine = 5-methyluridine(1939) in 23S rRNA + S-adenosyl-L-homocysteine + H(+)</text>
        <dbReference type="Rhea" id="RHEA:42908"/>
        <dbReference type="Rhea" id="RHEA-COMP:10278"/>
        <dbReference type="Rhea" id="RHEA-COMP:10279"/>
        <dbReference type="ChEBI" id="CHEBI:15378"/>
        <dbReference type="ChEBI" id="CHEBI:57856"/>
        <dbReference type="ChEBI" id="CHEBI:59789"/>
        <dbReference type="ChEBI" id="CHEBI:65315"/>
        <dbReference type="ChEBI" id="CHEBI:74447"/>
        <dbReference type="EC" id="2.1.1.190"/>
    </reaction>
</comment>
<comment type="similarity">
    <text evidence="1">Belongs to the class I-like SAM-binding methyltransferase superfamily. RNA M5U methyltransferase family. RlmD subfamily.</text>
</comment>